<organism>
    <name type="scientific">Salmonella arizonae (strain ATCC BAA-731 / CDC346-86 / RSK2980)</name>
    <dbReference type="NCBI Taxonomy" id="41514"/>
    <lineage>
        <taxon>Bacteria</taxon>
        <taxon>Pseudomonadati</taxon>
        <taxon>Pseudomonadota</taxon>
        <taxon>Gammaproteobacteria</taxon>
        <taxon>Enterobacterales</taxon>
        <taxon>Enterobacteriaceae</taxon>
        <taxon>Salmonella</taxon>
    </lineage>
</organism>
<dbReference type="EC" id="2.7.7.4" evidence="2"/>
<dbReference type="EMBL" id="CP000880">
    <property type="protein sequence ID" value="ABX19976.1"/>
    <property type="molecule type" value="Genomic_DNA"/>
</dbReference>
<dbReference type="SMR" id="A9MF24"/>
<dbReference type="STRING" id="41514.SARI_00022"/>
<dbReference type="KEGG" id="ses:SARI_00022"/>
<dbReference type="HOGENOM" id="CLU_007265_5_2_6"/>
<dbReference type="UniPathway" id="UPA00140">
    <property type="reaction ID" value="UER00204"/>
</dbReference>
<dbReference type="Proteomes" id="UP000002084">
    <property type="component" value="Chromosome"/>
</dbReference>
<dbReference type="GO" id="GO:0005524">
    <property type="term" value="F:ATP binding"/>
    <property type="evidence" value="ECO:0007669"/>
    <property type="project" value="UniProtKB-KW"/>
</dbReference>
<dbReference type="GO" id="GO:0005525">
    <property type="term" value="F:GTP binding"/>
    <property type="evidence" value="ECO:0007669"/>
    <property type="project" value="UniProtKB-UniRule"/>
</dbReference>
<dbReference type="GO" id="GO:0003924">
    <property type="term" value="F:GTPase activity"/>
    <property type="evidence" value="ECO:0007669"/>
    <property type="project" value="InterPro"/>
</dbReference>
<dbReference type="GO" id="GO:0004781">
    <property type="term" value="F:sulfate adenylyltransferase (ATP) activity"/>
    <property type="evidence" value="ECO:0007669"/>
    <property type="project" value="UniProtKB-UniRule"/>
</dbReference>
<dbReference type="GO" id="GO:0070814">
    <property type="term" value="P:hydrogen sulfide biosynthetic process"/>
    <property type="evidence" value="ECO:0007669"/>
    <property type="project" value="UniProtKB-UniRule"/>
</dbReference>
<dbReference type="GO" id="GO:0000103">
    <property type="term" value="P:sulfate assimilation"/>
    <property type="evidence" value="ECO:0007669"/>
    <property type="project" value="UniProtKB-UniRule"/>
</dbReference>
<dbReference type="CDD" id="cd04166">
    <property type="entry name" value="CysN_ATPS"/>
    <property type="match status" value="1"/>
</dbReference>
<dbReference type="CDD" id="cd03695">
    <property type="entry name" value="CysN_NodQ_II"/>
    <property type="match status" value="1"/>
</dbReference>
<dbReference type="CDD" id="cd04095">
    <property type="entry name" value="CysN_NoDQ_III"/>
    <property type="match status" value="1"/>
</dbReference>
<dbReference type="FunFam" id="2.40.30.10:FF:000027">
    <property type="entry name" value="Sulfate adenylyltransferase subunit 1"/>
    <property type="match status" value="1"/>
</dbReference>
<dbReference type="FunFam" id="2.40.30.10:FF:000031">
    <property type="entry name" value="Sulfate adenylyltransferase subunit 1"/>
    <property type="match status" value="1"/>
</dbReference>
<dbReference type="FunFam" id="3.40.50.300:FF:000119">
    <property type="entry name" value="Sulfate adenylyltransferase subunit 1"/>
    <property type="match status" value="1"/>
</dbReference>
<dbReference type="Gene3D" id="3.40.50.300">
    <property type="entry name" value="P-loop containing nucleotide triphosphate hydrolases"/>
    <property type="match status" value="1"/>
</dbReference>
<dbReference type="Gene3D" id="2.40.30.10">
    <property type="entry name" value="Translation factors"/>
    <property type="match status" value="2"/>
</dbReference>
<dbReference type="HAMAP" id="MF_00062">
    <property type="entry name" value="Sulf_adenylyltr_sub1"/>
    <property type="match status" value="1"/>
</dbReference>
<dbReference type="InterPro" id="IPR041757">
    <property type="entry name" value="CysN_GTP-bd"/>
</dbReference>
<dbReference type="InterPro" id="IPR044138">
    <property type="entry name" value="CysN_II"/>
</dbReference>
<dbReference type="InterPro" id="IPR044139">
    <property type="entry name" value="CysN_NoDQ_III"/>
</dbReference>
<dbReference type="InterPro" id="IPR031157">
    <property type="entry name" value="G_TR_CS"/>
</dbReference>
<dbReference type="InterPro" id="IPR054696">
    <property type="entry name" value="GTP-eEF1A_C"/>
</dbReference>
<dbReference type="InterPro" id="IPR027417">
    <property type="entry name" value="P-loop_NTPase"/>
</dbReference>
<dbReference type="InterPro" id="IPR005225">
    <property type="entry name" value="Small_GTP-bd"/>
</dbReference>
<dbReference type="InterPro" id="IPR011779">
    <property type="entry name" value="SO4_adenylTrfase_lsu"/>
</dbReference>
<dbReference type="InterPro" id="IPR000795">
    <property type="entry name" value="T_Tr_GTP-bd_dom"/>
</dbReference>
<dbReference type="InterPro" id="IPR050100">
    <property type="entry name" value="TRAFAC_GTPase_members"/>
</dbReference>
<dbReference type="InterPro" id="IPR009000">
    <property type="entry name" value="Transl_B-barrel_sf"/>
</dbReference>
<dbReference type="InterPro" id="IPR009001">
    <property type="entry name" value="Transl_elong_EF1A/Init_IF2_C"/>
</dbReference>
<dbReference type="NCBIfam" id="TIGR02034">
    <property type="entry name" value="CysN"/>
    <property type="match status" value="1"/>
</dbReference>
<dbReference type="NCBIfam" id="NF003478">
    <property type="entry name" value="PRK05124.1"/>
    <property type="match status" value="1"/>
</dbReference>
<dbReference type="NCBIfam" id="TIGR00231">
    <property type="entry name" value="small_GTP"/>
    <property type="match status" value="1"/>
</dbReference>
<dbReference type="PANTHER" id="PTHR23115">
    <property type="entry name" value="TRANSLATION FACTOR"/>
    <property type="match status" value="1"/>
</dbReference>
<dbReference type="Pfam" id="PF22594">
    <property type="entry name" value="GTP-eEF1A_C"/>
    <property type="match status" value="1"/>
</dbReference>
<dbReference type="Pfam" id="PF00009">
    <property type="entry name" value="GTP_EFTU"/>
    <property type="match status" value="1"/>
</dbReference>
<dbReference type="PRINTS" id="PR00315">
    <property type="entry name" value="ELONGATNFCT"/>
</dbReference>
<dbReference type="SUPFAM" id="SSF50465">
    <property type="entry name" value="EF-Tu/eEF-1alpha/eIF2-gamma C-terminal domain"/>
    <property type="match status" value="1"/>
</dbReference>
<dbReference type="SUPFAM" id="SSF52540">
    <property type="entry name" value="P-loop containing nucleoside triphosphate hydrolases"/>
    <property type="match status" value="1"/>
</dbReference>
<dbReference type="SUPFAM" id="SSF50447">
    <property type="entry name" value="Translation proteins"/>
    <property type="match status" value="1"/>
</dbReference>
<dbReference type="PROSITE" id="PS00301">
    <property type="entry name" value="G_TR_1"/>
    <property type="match status" value="1"/>
</dbReference>
<dbReference type="PROSITE" id="PS51722">
    <property type="entry name" value="G_TR_2"/>
    <property type="match status" value="1"/>
</dbReference>
<sequence>MNTILAQQIAKEGGVEAWMIAQQHKSLLRFLTCGSVDDGKSTLIGRLLHDTRQIYEDQLSSLHNDSKRHGTQGEKLDLALLVDGLQAEREQGITIDVAYRYFSTEKRKFIIADTPGHEQYTRNMATGASTCDLAILLIDARKGVLDQTRRHSFISTLLGIKHLVVAINKMDLVDYREETFARIREDYLTFAERLPGDLDIRFVPLSALEGDNVAAQSANMRWYSGPTLLEVLETVDIQRVVDRQPMRFPVQYVNRPNLDFRGYVGTLASGSIKVGERIKVLPSGVESSVSRIVTFDGDREEAYAGEAITLVLNDEIDISRGDLLLAANEALAPAQYAAIDVVWMAEQPLTPGQSYDVKLAGKKTRARVETIRYQIDINNLTQRDVESLPLNGIGLVEMAFDEPLALDIYQQNPVTGGLIFIDRLSNITVGAGMVREPVERGVTPPMEYSAFELELNALVRRHFPHWNARDLLGDKHGAA</sequence>
<accession>A9MF24</accession>
<name>CYSN_SALAR</name>
<proteinExistence type="inferred from homology"/>
<keyword id="KW-0067">ATP-binding</keyword>
<keyword id="KW-0342">GTP-binding</keyword>
<keyword id="KW-0547">Nucleotide-binding</keyword>
<keyword id="KW-0548">Nucleotidyltransferase</keyword>
<keyword id="KW-1185">Reference proteome</keyword>
<keyword id="KW-0808">Transferase</keyword>
<feature type="chain" id="PRO_1000075066" description="Sulfate adenylyltransferase subunit 1">
    <location>
        <begin position="1"/>
        <end position="479"/>
    </location>
</feature>
<feature type="domain" description="tr-type G">
    <location>
        <begin position="25"/>
        <end position="239"/>
    </location>
</feature>
<feature type="region of interest" description="G1" evidence="1">
    <location>
        <begin position="34"/>
        <end position="41"/>
    </location>
</feature>
<feature type="region of interest" description="G2" evidence="1">
    <location>
        <begin position="92"/>
        <end position="96"/>
    </location>
</feature>
<feature type="region of interest" description="G3" evidence="1">
    <location>
        <begin position="113"/>
        <end position="116"/>
    </location>
</feature>
<feature type="region of interest" description="G4" evidence="1">
    <location>
        <begin position="168"/>
        <end position="171"/>
    </location>
</feature>
<feature type="region of interest" description="G5" evidence="1">
    <location>
        <begin position="206"/>
        <end position="208"/>
    </location>
</feature>
<feature type="binding site" evidence="2">
    <location>
        <begin position="34"/>
        <end position="41"/>
    </location>
    <ligand>
        <name>GTP</name>
        <dbReference type="ChEBI" id="CHEBI:37565"/>
    </ligand>
</feature>
<feature type="binding site" evidence="2">
    <location>
        <begin position="113"/>
        <end position="117"/>
    </location>
    <ligand>
        <name>GTP</name>
        <dbReference type="ChEBI" id="CHEBI:37565"/>
    </ligand>
</feature>
<feature type="binding site" evidence="2">
    <location>
        <begin position="168"/>
        <end position="171"/>
    </location>
    <ligand>
        <name>GTP</name>
        <dbReference type="ChEBI" id="CHEBI:37565"/>
    </ligand>
</feature>
<reference key="1">
    <citation type="submission" date="2007-11" db="EMBL/GenBank/DDBJ databases">
        <authorList>
            <consortium name="The Salmonella enterica serovar Arizonae Genome Sequencing Project"/>
            <person name="McClelland M."/>
            <person name="Sanderson E.K."/>
            <person name="Porwollik S."/>
            <person name="Spieth J."/>
            <person name="Clifton W.S."/>
            <person name="Fulton R."/>
            <person name="Chunyan W."/>
            <person name="Wollam A."/>
            <person name="Shah N."/>
            <person name="Pepin K."/>
            <person name="Bhonagiri V."/>
            <person name="Nash W."/>
            <person name="Johnson M."/>
            <person name="Thiruvilangam P."/>
            <person name="Wilson R."/>
        </authorList>
    </citation>
    <scope>NUCLEOTIDE SEQUENCE [LARGE SCALE GENOMIC DNA]</scope>
    <source>
        <strain>ATCC BAA-731 / CDC346-86 / RSK2980</strain>
    </source>
</reference>
<protein>
    <recommendedName>
        <fullName evidence="2">Sulfate adenylyltransferase subunit 1</fullName>
        <ecNumber evidence="2">2.7.7.4</ecNumber>
    </recommendedName>
    <alternativeName>
        <fullName evidence="2">ATP-sulfurylase large subunit</fullName>
    </alternativeName>
    <alternativeName>
        <fullName evidence="2">Sulfate adenylate transferase</fullName>
        <shortName evidence="2">SAT</shortName>
    </alternativeName>
</protein>
<gene>
    <name evidence="2" type="primary">cysN</name>
    <name type="ordered locus">SARI_00022</name>
</gene>
<evidence type="ECO:0000250" key="1"/>
<evidence type="ECO:0000255" key="2">
    <source>
        <dbReference type="HAMAP-Rule" id="MF_00062"/>
    </source>
</evidence>
<comment type="function">
    <text evidence="2">With CysD forms the ATP sulfurylase (ATPS) that catalyzes the adenylation of sulfate producing adenosine 5'-phosphosulfate (APS) and diphosphate, the first enzymatic step in sulfur assimilation pathway. APS synthesis involves the formation of a high-energy phosphoric-sulfuric acid anhydride bond driven by GTP hydrolysis by CysN coupled to ATP hydrolysis by CysD.</text>
</comment>
<comment type="catalytic activity">
    <reaction evidence="2">
        <text>sulfate + ATP + H(+) = adenosine 5'-phosphosulfate + diphosphate</text>
        <dbReference type="Rhea" id="RHEA:18133"/>
        <dbReference type="ChEBI" id="CHEBI:15378"/>
        <dbReference type="ChEBI" id="CHEBI:16189"/>
        <dbReference type="ChEBI" id="CHEBI:30616"/>
        <dbReference type="ChEBI" id="CHEBI:33019"/>
        <dbReference type="ChEBI" id="CHEBI:58243"/>
        <dbReference type="EC" id="2.7.7.4"/>
    </reaction>
</comment>
<comment type="pathway">
    <text evidence="2">Sulfur metabolism; hydrogen sulfide biosynthesis; sulfite from sulfate: step 1/3.</text>
</comment>
<comment type="subunit">
    <text evidence="2">Heterodimer composed of CysD, the smaller subunit, and CysN.</text>
</comment>
<comment type="similarity">
    <text evidence="2">Belongs to the TRAFAC class translation factor GTPase superfamily. Classic translation factor GTPase family. CysN/NodQ subfamily.</text>
</comment>